<sequence length="71" mass="8024">MPRAIRGVLIECDPSIKSIIVSIDSANHDYIIEDLDDERVVVKENMVSMLKAKLEDRLKENLPPEEESGSE</sequence>
<protein>
    <recommendedName>
        <fullName>General transcription and DNA repair factor IIH subunit TFB5</fullName>
        <shortName>TFIIH subunit TFB5</shortName>
    </recommendedName>
    <alternativeName>
        <fullName>RNA polymerase II transcription factor B subunit 5</fullName>
    </alternativeName>
</protein>
<organism>
    <name type="scientific">Gibberella zeae (strain ATCC MYA-4620 / CBS 123657 / FGSC 9075 / NRRL 31084 / PH-1)</name>
    <name type="common">Wheat head blight fungus</name>
    <name type="synonym">Fusarium graminearum</name>
    <dbReference type="NCBI Taxonomy" id="229533"/>
    <lineage>
        <taxon>Eukaryota</taxon>
        <taxon>Fungi</taxon>
        <taxon>Dikarya</taxon>
        <taxon>Ascomycota</taxon>
        <taxon>Pezizomycotina</taxon>
        <taxon>Sordariomycetes</taxon>
        <taxon>Hypocreomycetidae</taxon>
        <taxon>Hypocreales</taxon>
        <taxon>Nectriaceae</taxon>
        <taxon>Fusarium</taxon>
    </lineage>
</organism>
<feature type="chain" id="PRO_0000119281" description="General transcription and DNA repair factor IIH subunit TFB5">
    <location>
        <begin position="1"/>
        <end position="71"/>
    </location>
</feature>
<keyword id="KW-0227">DNA damage</keyword>
<keyword id="KW-0234">DNA repair</keyword>
<keyword id="KW-0539">Nucleus</keyword>
<keyword id="KW-1185">Reference proteome</keyword>
<keyword id="KW-0804">Transcription</keyword>
<keyword id="KW-0805">Transcription regulation</keyword>
<proteinExistence type="inferred from homology"/>
<accession>Q4HYI0</accession>
<accession>A0A0E0RVL6</accession>
<accession>I1RZX2</accession>
<accession>V6RPX7</accession>
<comment type="function">
    <text evidence="2">Component of the general transcription and DNA repair factor IIH (TFIIH) core complex, which is involved in general and transcription-coupled nucleotide excision repair (NER) of damaged DNA and, when complexed to TFIIK, in RNA transcription by RNA polymerase II. In NER, TFIIH acts by opening DNA around the lesion to allow the excision of the damaged oligonucleotide and its replacement by a new DNA fragment. In transcription, TFIIH has an essential role in transcription initiation. When the pre-initiation complex (PIC) has been established, TFIIH is required for promoter opening and promoter escape. Phosphorylation of the C-terminal tail (CTD) of the largest subunit of RNA polymerase II by the kinase module TFIIK controls the initiation of transcription.</text>
</comment>
<comment type="subunit">
    <text evidence="2">Component of the 7-subunit TFIIH core complex composed of XPB/SSL2, XPD/RAD3, SSL1, TFB1, TFB2, TFB4 and TFB5, which is active in NER. The core complex associates with the 3-subunit CTD-kinase module TFIIK composed of CCL1, KIN28 and TFB3 to form the 10-subunit holoenzyme (holo-TFIIH) active in transcription.</text>
</comment>
<comment type="subcellular location">
    <subcellularLocation>
        <location evidence="1">Nucleus</location>
    </subcellularLocation>
</comment>
<comment type="similarity">
    <text evidence="3">Belongs to the TFB5 family.</text>
</comment>
<dbReference type="EMBL" id="DS231669">
    <property type="protein sequence ID" value="ESU16628.1"/>
    <property type="molecule type" value="Genomic_DNA"/>
</dbReference>
<dbReference type="EMBL" id="HG970332">
    <property type="protein sequence ID" value="CEF75291.1"/>
    <property type="molecule type" value="Genomic_DNA"/>
</dbReference>
<dbReference type="RefSeq" id="XP_011318890.1">
    <property type="nucleotide sequence ID" value="XM_011320588.1"/>
</dbReference>
<dbReference type="SMR" id="Q4HYI0"/>
<dbReference type="FunCoup" id="Q4HYI0">
    <property type="interactions" value="160"/>
</dbReference>
<dbReference type="STRING" id="229533.Q4HYI0"/>
<dbReference type="GeneID" id="23556902"/>
<dbReference type="KEGG" id="fgr:FGSG_09978"/>
<dbReference type="VEuPathDB" id="FungiDB:FGRAMPH1_01G06973"/>
<dbReference type="eggNOG" id="KOG3451">
    <property type="taxonomic scope" value="Eukaryota"/>
</dbReference>
<dbReference type="HOGENOM" id="CLU_166246_3_1_1"/>
<dbReference type="InParanoid" id="Q4HYI0"/>
<dbReference type="OrthoDB" id="54437at110618"/>
<dbReference type="Proteomes" id="UP000070720">
    <property type="component" value="Chromosome 1"/>
</dbReference>
<dbReference type="GO" id="GO:0000439">
    <property type="term" value="C:transcription factor TFIIH core complex"/>
    <property type="evidence" value="ECO:0007669"/>
    <property type="project" value="InterPro"/>
</dbReference>
<dbReference type="GO" id="GO:0005675">
    <property type="term" value="C:transcription factor TFIIH holo complex"/>
    <property type="evidence" value="ECO:0007669"/>
    <property type="project" value="TreeGrafter"/>
</dbReference>
<dbReference type="GO" id="GO:0006294">
    <property type="term" value="P:nucleotide-excision repair, preincision complex assembly"/>
    <property type="evidence" value="ECO:0007669"/>
    <property type="project" value="TreeGrafter"/>
</dbReference>
<dbReference type="GO" id="GO:0006367">
    <property type="term" value="P:transcription initiation at RNA polymerase II promoter"/>
    <property type="evidence" value="ECO:0007669"/>
    <property type="project" value="InterPro"/>
</dbReference>
<dbReference type="FunFam" id="3.30.70.1220:FF:000002">
    <property type="entry name" value="RNA polymerase II transcription factor B subunit 5"/>
    <property type="match status" value="1"/>
</dbReference>
<dbReference type="Gene3D" id="3.30.70.1220">
    <property type="entry name" value="TFB5-like"/>
    <property type="match status" value="1"/>
</dbReference>
<dbReference type="InterPro" id="IPR035935">
    <property type="entry name" value="TFB5-like_sf"/>
</dbReference>
<dbReference type="InterPro" id="IPR009400">
    <property type="entry name" value="TFIIH_TTDA/Tfb5"/>
</dbReference>
<dbReference type="PANTHER" id="PTHR28580">
    <property type="entry name" value="GENERAL TRANSCRIPTION FACTOR IIH SUBUNIT 5"/>
    <property type="match status" value="1"/>
</dbReference>
<dbReference type="PANTHER" id="PTHR28580:SF1">
    <property type="entry name" value="GENERAL TRANSCRIPTION FACTOR IIH SUBUNIT 5"/>
    <property type="match status" value="1"/>
</dbReference>
<dbReference type="Pfam" id="PF06331">
    <property type="entry name" value="Tfb5"/>
    <property type="match status" value="1"/>
</dbReference>
<dbReference type="SMART" id="SM01395">
    <property type="entry name" value="Tbf5"/>
    <property type="match status" value="1"/>
</dbReference>
<dbReference type="SUPFAM" id="SSF142897">
    <property type="entry name" value="TFB5-like"/>
    <property type="match status" value="1"/>
</dbReference>
<reference key="1">
    <citation type="journal article" date="2007" name="Science">
        <title>The Fusarium graminearum genome reveals a link between localized polymorphism and pathogen specialization.</title>
        <authorList>
            <person name="Cuomo C.A."/>
            <person name="Gueldener U."/>
            <person name="Xu J.-R."/>
            <person name="Trail F."/>
            <person name="Turgeon B.G."/>
            <person name="Di Pietro A."/>
            <person name="Walton J.D."/>
            <person name="Ma L.-J."/>
            <person name="Baker S.E."/>
            <person name="Rep M."/>
            <person name="Adam G."/>
            <person name="Antoniw J."/>
            <person name="Baldwin T."/>
            <person name="Calvo S.E."/>
            <person name="Chang Y.-L."/>
            <person name="DeCaprio D."/>
            <person name="Gale L.R."/>
            <person name="Gnerre S."/>
            <person name="Goswami R.S."/>
            <person name="Hammond-Kosack K."/>
            <person name="Harris L.J."/>
            <person name="Hilburn K."/>
            <person name="Kennell J.C."/>
            <person name="Kroken S."/>
            <person name="Magnuson J.K."/>
            <person name="Mannhaupt G."/>
            <person name="Mauceli E.W."/>
            <person name="Mewes H.-W."/>
            <person name="Mitterbauer R."/>
            <person name="Muehlbauer G."/>
            <person name="Muensterkoetter M."/>
            <person name="Nelson D."/>
            <person name="O'Donnell K."/>
            <person name="Ouellet T."/>
            <person name="Qi W."/>
            <person name="Quesneville H."/>
            <person name="Roncero M.I.G."/>
            <person name="Seong K.-Y."/>
            <person name="Tetko I.V."/>
            <person name="Urban M."/>
            <person name="Waalwijk C."/>
            <person name="Ward T.J."/>
            <person name="Yao J."/>
            <person name="Birren B.W."/>
            <person name="Kistler H.C."/>
        </authorList>
    </citation>
    <scope>NUCLEOTIDE SEQUENCE [LARGE SCALE GENOMIC DNA]</scope>
    <source>
        <strain>ATCC MYA-4620 / CBS 123657 / FGSC 9075 / NRRL 31084 / PH-1</strain>
    </source>
</reference>
<reference key="2">
    <citation type="journal article" date="2010" name="Nature">
        <title>Comparative genomics reveals mobile pathogenicity chromosomes in Fusarium.</title>
        <authorList>
            <person name="Ma L.-J."/>
            <person name="van der Does H.C."/>
            <person name="Borkovich K.A."/>
            <person name="Coleman J.J."/>
            <person name="Daboussi M.-J."/>
            <person name="Di Pietro A."/>
            <person name="Dufresne M."/>
            <person name="Freitag M."/>
            <person name="Grabherr M."/>
            <person name="Henrissat B."/>
            <person name="Houterman P.M."/>
            <person name="Kang S."/>
            <person name="Shim W.-B."/>
            <person name="Woloshuk C."/>
            <person name="Xie X."/>
            <person name="Xu J.-R."/>
            <person name="Antoniw J."/>
            <person name="Baker S.E."/>
            <person name="Bluhm B.H."/>
            <person name="Breakspear A."/>
            <person name="Brown D.W."/>
            <person name="Butchko R.A.E."/>
            <person name="Chapman S."/>
            <person name="Coulson R."/>
            <person name="Coutinho P.M."/>
            <person name="Danchin E.G.J."/>
            <person name="Diener A."/>
            <person name="Gale L.R."/>
            <person name="Gardiner D.M."/>
            <person name="Goff S."/>
            <person name="Hammond-Kosack K.E."/>
            <person name="Hilburn K."/>
            <person name="Hua-Van A."/>
            <person name="Jonkers W."/>
            <person name="Kazan K."/>
            <person name="Kodira C.D."/>
            <person name="Koehrsen M."/>
            <person name="Kumar L."/>
            <person name="Lee Y.-H."/>
            <person name="Li L."/>
            <person name="Manners J.M."/>
            <person name="Miranda-Saavedra D."/>
            <person name="Mukherjee M."/>
            <person name="Park G."/>
            <person name="Park J."/>
            <person name="Park S.-Y."/>
            <person name="Proctor R.H."/>
            <person name="Regev A."/>
            <person name="Ruiz-Roldan M.C."/>
            <person name="Sain D."/>
            <person name="Sakthikumar S."/>
            <person name="Sykes S."/>
            <person name="Schwartz D.C."/>
            <person name="Turgeon B.G."/>
            <person name="Wapinski I."/>
            <person name="Yoder O."/>
            <person name="Young S."/>
            <person name="Zeng Q."/>
            <person name="Zhou S."/>
            <person name="Galagan J."/>
            <person name="Cuomo C.A."/>
            <person name="Kistler H.C."/>
            <person name="Rep M."/>
        </authorList>
    </citation>
    <scope>GENOME REANNOTATION</scope>
    <source>
        <strain>ATCC MYA-4620 / CBS 123657 / FGSC 9075 / NRRL 31084 / PH-1</strain>
    </source>
</reference>
<reference key="3">
    <citation type="journal article" date="2015" name="BMC Genomics">
        <title>The completed genome sequence of the pathogenic ascomycete fungus Fusarium graminearum.</title>
        <authorList>
            <person name="King R."/>
            <person name="Urban M."/>
            <person name="Hammond-Kosack M.C.U."/>
            <person name="Hassani-Pak K."/>
            <person name="Hammond-Kosack K.E."/>
        </authorList>
    </citation>
    <scope>NUCLEOTIDE SEQUENCE [LARGE SCALE GENOMIC DNA]</scope>
    <source>
        <strain>ATCC MYA-4620 / CBS 123657 / FGSC 9075 / NRRL 31084 / PH-1</strain>
    </source>
</reference>
<gene>
    <name type="primary">TFB5</name>
    <name type="ORF">FGRRES_09978</name>
    <name type="ORF">FGSG_09978</name>
</gene>
<evidence type="ECO:0000250" key="1"/>
<evidence type="ECO:0000250" key="2">
    <source>
        <dbReference type="UniProtKB" id="Q3E7C1"/>
    </source>
</evidence>
<evidence type="ECO:0000305" key="3"/>
<name>TFB5_GIBZE</name>